<feature type="chain" id="PRO_0000225896" description="Small ribosomal subunit protein uS8">
    <location>
        <begin position="1"/>
        <end position="132"/>
    </location>
</feature>
<comment type="function">
    <text evidence="1">One of the primary rRNA binding proteins, it binds directly to 16S rRNA central domain where it helps coordinate assembly of the platform of the 30S subunit.</text>
</comment>
<comment type="subunit">
    <text evidence="1">Part of the 30S ribosomal subunit. Contacts proteins S5 and S12.</text>
</comment>
<comment type="similarity">
    <text evidence="1">Belongs to the universal ribosomal protein uS8 family.</text>
</comment>
<protein>
    <recommendedName>
        <fullName evidence="1">Small ribosomal subunit protein uS8</fullName>
    </recommendedName>
    <alternativeName>
        <fullName evidence="2">30S ribosomal protein S8</fullName>
    </alternativeName>
</protein>
<reference key="1">
    <citation type="journal article" date="2005" name="Proc. Natl. Acad. Sci. U.S.A.">
        <title>Genome analysis of multiple pathogenic isolates of Streptococcus agalactiae: implications for the microbial 'pan-genome'.</title>
        <authorList>
            <person name="Tettelin H."/>
            <person name="Masignani V."/>
            <person name="Cieslewicz M.J."/>
            <person name="Donati C."/>
            <person name="Medini D."/>
            <person name="Ward N.L."/>
            <person name="Angiuoli S.V."/>
            <person name="Crabtree J."/>
            <person name="Jones A.L."/>
            <person name="Durkin A.S."/>
            <person name="DeBoy R.T."/>
            <person name="Davidsen T.M."/>
            <person name="Mora M."/>
            <person name="Scarselli M."/>
            <person name="Margarit y Ros I."/>
            <person name="Peterson J.D."/>
            <person name="Hauser C.R."/>
            <person name="Sundaram J.P."/>
            <person name="Nelson W.C."/>
            <person name="Madupu R."/>
            <person name="Brinkac L.M."/>
            <person name="Dodson R.J."/>
            <person name="Rosovitz M.J."/>
            <person name="Sullivan S.A."/>
            <person name="Daugherty S.C."/>
            <person name="Haft D.H."/>
            <person name="Selengut J."/>
            <person name="Gwinn M.L."/>
            <person name="Zhou L."/>
            <person name="Zafar N."/>
            <person name="Khouri H."/>
            <person name="Radune D."/>
            <person name="Dimitrov G."/>
            <person name="Watkins K."/>
            <person name="O'Connor K.J."/>
            <person name="Smith S."/>
            <person name="Utterback T.R."/>
            <person name="White O."/>
            <person name="Rubens C.E."/>
            <person name="Grandi G."/>
            <person name="Madoff L.C."/>
            <person name="Kasper D.L."/>
            <person name="Telford J.L."/>
            <person name="Wessels M.R."/>
            <person name="Rappuoli R."/>
            <person name="Fraser C.M."/>
        </authorList>
    </citation>
    <scope>NUCLEOTIDE SEQUENCE [LARGE SCALE GENOMIC DNA]</scope>
    <source>
        <strain>ATCC 27591 / A909 / CDC SS700</strain>
    </source>
</reference>
<dbReference type="EMBL" id="CP000114">
    <property type="protein sequence ID" value="ABA44484.1"/>
    <property type="molecule type" value="Genomic_DNA"/>
</dbReference>
<dbReference type="RefSeq" id="WP_000245501.1">
    <property type="nucleotide sequence ID" value="NC_007432.1"/>
</dbReference>
<dbReference type="SMR" id="Q3K3V5"/>
<dbReference type="GeneID" id="66885032"/>
<dbReference type="KEGG" id="sak:SAK_0105"/>
<dbReference type="HOGENOM" id="CLU_098428_0_2_9"/>
<dbReference type="GO" id="GO:1990904">
    <property type="term" value="C:ribonucleoprotein complex"/>
    <property type="evidence" value="ECO:0007669"/>
    <property type="project" value="UniProtKB-KW"/>
</dbReference>
<dbReference type="GO" id="GO:0005840">
    <property type="term" value="C:ribosome"/>
    <property type="evidence" value="ECO:0007669"/>
    <property type="project" value="UniProtKB-KW"/>
</dbReference>
<dbReference type="GO" id="GO:0019843">
    <property type="term" value="F:rRNA binding"/>
    <property type="evidence" value="ECO:0007669"/>
    <property type="project" value="UniProtKB-UniRule"/>
</dbReference>
<dbReference type="GO" id="GO:0003735">
    <property type="term" value="F:structural constituent of ribosome"/>
    <property type="evidence" value="ECO:0007669"/>
    <property type="project" value="InterPro"/>
</dbReference>
<dbReference type="GO" id="GO:0006412">
    <property type="term" value="P:translation"/>
    <property type="evidence" value="ECO:0007669"/>
    <property type="project" value="UniProtKB-UniRule"/>
</dbReference>
<dbReference type="FunFam" id="3.30.1370.30:FF:000002">
    <property type="entry name" value="30S ribosomal protein S8"/>
    <property type="match status" value="1"/>
</dbReference>
<dbReference type="FunFam" id="3.30.1490.10:FF:000001">
    <property type="entry name" value="30S ribosomal protein S8"/>
    <property type="match status" value="1"/>
</dbReference>
<dbReference type="Gene3D" id="3.30.1370.30">
    <property type="match status" value="1"/>
</dbReference>
<dbReference type="Gene3D" id="3.30.1490.10">
    <property type="match status" value="1"/>
</dbReference>
<dbReference type="HAMAP" id="MF_01302_B">
    <property type="entry name" value="Ribosomal_uS8_B"/>
    <property type="match status" value="1"/>
</dbReference>
<dbReference type="InterPro" id="IPR000630">
    <property type="entry name" value="Ribosomal_uS8"/>
</dbReference>
<dbReference type="InterPro" id="IPR047863">
    <property type="entry name" value="Ribosomal_uS8_CS"/>
</dbReference>
<dbReference type="InterPro" id="IPR035987">
    <property type="entry name" value="Ribosomal_uS8_sf"/>
</dbReference>
<dbReference type="NCBIfam" id="NF001109">
    <property type="entry name" value="PRK00136.1"/>
    <property type="match status" value="1"/>
</dbReference>
<dbReference type="PANTHER" id="PTHR11758">
    <property type="entry name" value="40S RIBOSOMAL PROTEIN S15A"/>
    <property type="match status" value="1"/>
</dbReference>
<dbReference type="Pfam" id="PF00410">
    <property type="entry name" value="Ribosomal_S8"/>
    <property type="match status" value="1"/>
</dbReference>
<dbReference type="SUPFAM" id="SSF56047">
    <property type="entry name" value="Ribosomal protein S8"/>
    <property type="match status" value="1"/>
</dbReference>
<dbReference type="PROSITE" id="PS00053">
    <property type="entry name" value="RIBOSOMAL_S8"/>
    <property type="match status" value="1"/>
</dbReference>
<accession>Q3K3V5</accession>
<evidence type="ECO:0000255" key="1">
    <source>
        <dbReference type="HAMAP-Rule" id="MF_01302"/>
    </source>
</evidence>
<evidence type="ECO:0000305" key="2"/>
<keyword id="KW-0687">Ribonucleoprotein</keyword>
<keyword id="KW-0689">Ribosomal protein</keyword>
<keyword id="KW-0694">RNA-binding</keyword>
<keyword id="KW-0699">rRNA-binding</keyword>
<sequence>MVMTDPIADFLTRIRNANQAKHEVLEVPASNIKKGIADILKREGFVKNVEVIEDDKQGIIRVFLKYGQNGERVITNLKRISKPGLRVYTKHEDMPKVLNGLGIAIVSTSEGLLTDKEARQKNVGGEVLAYIW</sequence>
<name>RS8_STRA1</name>
<organism>
    <name type="scientific">Streptococcus agalactiae serotype Ia (strain ATCC 27591 / A909 / CDC SS700)</name>
    <dbReference type="NCBI Taxonomy" id="205921"/>
    <lineage>
        <taxon>Bacteria</taxon>
        <taxon>Bacillati</taxon>
        <taxon>Bacillota</taxon>
        <taxon>Bacilli</taxon>
        <taxon>Lactobacillales</taxon>
        <taxon>Streptococcaceae</taxon>
        <taxon>Streptococcus</taxon>
    </lineage>
</organism>
<gene>
    <name evidence="1" type="primary">rpsH</name>
    <name type="ordered locus">SAK_0105</name>
</gene>
<proteinExistence type="inferred from homology"/>